<gene>
    <name type="primary">ddb-1</name>
    <name type="ORF">M18.5</name>
</gene>
<organism>
    <name type="scientific">Caenorhabditis elegans</name>
    <dbReference type="NCBI Taxonomy" id="6239"/>
    <lineage>
        <taxon>Eukaryota</taxon>
        <taxon>Metazoa</taxon>
        <taxon>Ecdysozoa</taxon>
        <taxon>Nematoda</taxon>
        <taxon>Chromadorea</taxon>
        <taxon>Rhabditida</taxon>
        <taxon>Rhabditina</taxon>
        <taxon>Rhabditomorpha</taxon>
        <taxon>Rhabditoidea</taxon>
        <taxon>Rhabditidae</taxon>
        <taxon>Peloderinae</taxon>
        <taxon>Caenorhabditis</taxon>
    </lineage>
</organism>
<keyword id="KW-0131">Cell cycle</keyword>
<keyword id="KW-0963">Cytoplasm</keyword>
<keyword id="KW-0227">DNA damage</keyword>
<keyword id="KW-0234">DNA repair</keyword>
<keyword id="KW-0238">DNA-binding</keyword>
<keyword id="KW-0539">Nucleus</keyword>
<keyword id="KW-1185">Reference proteome</keyword>
<keyword id="KW-0833">Ubl conjugation pathway</keyword>
<proteinExistence type="evidence at protein level"/>
<feature type="chain" id="PRO_0000351087" description="DNA damage-binding protein 1">
    <location>
        <begin position="1"/>
        <end position="1134"/>
    </location>
</feature>
<dbReference type="EMBL" id="Z68507">
    <property type="protein sequence ID" value="CAA92824.2"/>
    <property type="molecule type" value="Genomic_DNA"/>
</dbReference>
<dbReference type="PIR" id="A88855">
    <property type="entry name" value="A88855"/>
</dbReference>
<dbReference type="PIR" id="T23798">
    <property type="entry name" value="T23798"/>
</dbReference>
<dbReference type="RefSeq" id="NP_502299.1">
    <property type="nucleotide sequence ID" value="NM_069898.9"/>
</dbReference>
<dbReference type="SMR" id="Q21554"/>
<dbReference type="BioGRID" id="43249">
    <property type="interactions" value="17"/>
</dbReference>
<dbReference type="DIP" id="DIP-25884N"/>
<dbReference type="FunCoup" id="Q21554">
    <property type="interactions" value="3529"/>
</dbReference>
<dbReference type="IntAct" id="Q21554">
    <property type="interactions" value="5"/>
</dbReference>
<dbReference type="STRING" id="6239.M18.5.1"/>
<dbReference type="PaxDb" id="6239-M18.5"/>
<dbReference type="PeptideAtlas" id="Q21554"/>
<dbReference type="EnsemblMetazoa" id="M18.5.1">
    <property type="protein sequence ID" value="M18.5.1"/>
    <property type="gene ID" value="WBGene00010890"/>
</dbReference>
<dbReference type="GeneID" id="178156"/>
<dbReference type="KEGG" id="cel:CELE_M18.5"/>
<dbReference type="UCSC" id="M18.5">
    <property type="organism name" value="c. elegans"/>
</dbReference>
<dbReference type="AGR" id="WB:WBGene00010890"/>
<dbReference type="CTD" id="178156"/>
<dbReference type="WormBase" id="M18.5">
    <property type="protein sequence ID" value="CE23880"/>
    <property type="gene ID" value="WBGene00010890"/>
    <property type="gene designation" value="ddb-1"/>
</dbReference>
<dbReference type="eggNOG" id="KOG1897">
    <property type="taxonomic scope" value="Eukaryota"/>
</dbReference>
<dbReference type="GeneTree" id="ENSGT00950000183151"/>
<dbReference type="HOGENOM" id="CLU_002893_0_1_1"/>
<dbReference type="InParanoid" id="Q21554"/>
<dbReference type="OMA" id="HQDFLMR"/>
<dbReference type="OrthoDB" id="433457at2759"/>
<dbReference type="PhylomeDB" id="Q21554"/>
<dbReference type="Reactome" id="R-CEL-110314">
    <property type="pathway name" value="Recognition of DNA damage by PCNA-containing replication complex"/>
</dbReference>
<dbReference type="Reactome" id="R-CEL-5696394">
    <property type="pathway name" value="DNA Damage Recognition in GG-NER"/>
</dbReference>
<dbReference type="Reactome" id="R-CEL-5696395">
    <property type="pathway name" value="Formation of Incision Complex in GG-NER"/>
</dbReference>
<dbReference type="Reactome" id="R-CEL-5696400">
    <property type="pathway name" value="Dual Incision in GG-NER"/>
</dbReference>
<dbReference type="Reactome" id="R-CEL-6781823">
    <property type="pathway name" value="Formation of TC-NER Pre-Incision Complex"/>
</dbReference>
<dbReference type="Reactome" id="R-CEL-6782135">
    <property type="pathway name" value="Dual incision in TC-NER"/>
</dbReference>
<dbReference type="Reactome" id="R-CEL-6782210">
    <property type="pathway name" value="Gap-filling DNA repair synthesis and ligation in TC-NER"/>
</dbReference>
<dbReference type="Reactome" id="R-CEL-8951664">
    <property type="pathway name" value="Neddylation"/>
</dbReference>
<dbReference type="UniPathway" id="UPA00143"/>
<dbReference type="PRO" id="PR:Q21554"/>
<dbReference type="Proteomes" id="UP000001940">
    <property type="component" value="Chromosome IV"/>
</dbReference>
<dbReference type="Bgee" id="WBGene00010890">
    <property type="expression patterns" value="Expressed in embryo and 4 other cell types or tissues"/>
</dbReference>
<dbReference type="GO" id="GO:0005737">
    <property type="term" value="C:cytoplasm"/>
    <property type="evidence" value="ECO:0000250"/>
    <property type="project" value="UniProtKB"/>
</dbReference>
<dbReference type="GO" id="GO:0005634">
    <property type="term" value="C:nucleus"/>
    <property type="evidence" value="ECO:0000250"/>
    <property type="project" value="UniProtKB"/>
</dbReference>
<dbReference type="GO" id="GO:0035861">
    <property type="term" value="C:site of double-strand break"/>
    <property type="evidence" value="ECO:0000318"/>
    <property type="project" value="GO_Central"/>
</dbReference>
<dbReference type="GO" id="GO:0003677">
    <property type="term" value="F:DNA binding"/>
    <property type="evidence" value="ECO:0007669"/>
    <property type="project" value="UniProtKB-KW"/>
</dbReference>
<dbReference type="GO" id="GO:0006281">
    <property type="term" value="P:DNA repair"/>
    <property type="evidence" value="ECO:0000318"/>
    <property type="project" value="GO_Central"/>
</dbReference>
<dbReference type="GO" id="GO:0043161">
    <property type="term" value="P:proteasome-mediated ubiquitin-dependent protein catabolic process"/>
    <property type="evidence" value="ECO:0000316"/>
    <property type="project" value="WormBase"/>
</dbReference>
<dbReference type="GO" id="GO:0016567">
    <property type="term" value="P:protein ubiquitination"/>
    <property type="evidence" value="ECO:0007669"/>
    <property type="project" value="UniProtKB-UniPathway"/>
</dbReference>
<dbReference type="FunFam" id="1.10.150.910:FF:000003">
    <property type="entry name" value="DNA damage-binding protein 1a"/>
    <property type="match status" value="1"/>
</dbReference>
<dbReference type="FunFam" id="2.130.10.10:FF:000592">
    <property type="entry name" value="UV-damaged DNA binding protein"/>
    <property type="match status" value="1"/>
</dbReference>
<dbReference type="Gene3D" id="1.10.150.910">
    <property type="match status" value="1"/>
</dbReference>
<dbReference type="Gene3D" id="2.130.10.10">
    <property type="entry name" value="YVTN repeat-like/Quinoprotein amine dehydrogenase"/>
    <property type="match status" value="3"/>
</dbReference>
<dbReference type="InterPro" id="IPR018846">
    <property type="entry name" value="Beta-prop_RSE1/DDB1/CPSF1_1st"/>
</dbReference>
<dbReference type="InterPro" id="IPR004871">
    <property type="entry name" value="Cleavage/polyA-sp_fac_asu_C"/>
</dbReference>
<dbReference type="InterPro" id="IPR011047">
    <property type="entry name" value="Quinoprotein_ADH-like_sf"/>
</dbReference>
<dbReference type="InterPro" id="IPR050358">
    <property type="entry name" value="RSE1/DDB1/CFT1/CPSF1"/>
</dbReference>
<dbReference type="InterPro" id="IPR015943">
    <property type="entry name" value="WD40/YVTN_repeat-like_dom_sf"/>
</dbReference>
<dbReference type="PANTHER" id="PTHR10644">
    <property type="entry name" value="DNA REPAIR/RNA PROCESSING CPSF FAMILY"/>
    <property type="match status" value="1"/>
</dbReference>
<dbReference type="Pfam" id="PF10433">
    <property type="entry name" value="Beta-prop_RSE1_1st"/>
    <property type="match status" value="1"/>
</dbReference>
<dbReference type="Pfam" id="PF23726">
    <property type="entry name" value="Beta-prop_RSE1_2nd"/>
    <property type="match status" value="1"/>
</dbReference>
<dbReference type="Pfam" id="PF03178">
    <property type="entry name" value="CPSF_A"/>
    <property type="match status" value="1"/>
</dbReference>
<dbReference type="SUPFAM" id="SSF101908">
    <property type="entry name" value="Putative isomerase YbhE"/>
    <property type="match status" value="1"/>
</dbReference>
<dbReference type="SUPFAM" id="SSF50998">
    <property type="entry name" value="Quinoprotein alcohol dehydrogenase-like"/>
    <property type="match status" value="1"/>
</dbReference>
<name>DDB1_CAEEL</name>
<sequence length="1134" mass="125718">MPISYCVSAKKASVVVESVVGNFTGHENVNLIVARGNRIDVQLVSPEGLKNVCEIPIYGQVLTIALVKCKRDKRHSLIVVTEKWHMAILAYRDGKVVTRAAGCIADPTGRATDNLFSLTIHRNGLIAIRAFEGSVKMIQWESGTDLRHFNVRFDYPNVSDFKFVDTGEDDVYRVAFIYDDDHGKHLQFSDLNMHDKEFRTYSRQASIAADSSVLIPVPHAIGGVIVLGSNSVLYKPNDNLGEVVPYTCSLLENTTFTCHGIVDASGERFLLSDTDGRLLMLLLNVTESQSGYTVKEMRIDYLGETSIADSINYIDNGVVFVGSRLGDSQLIRLMTEPNGGSYSVILETYSNIGPIRDMVMVESDGQPQLVTCTGADKDGSLRVIRNGIGIDELASVDLAGVVGIFPIRLDSNADNYVIVSLSDETHVLQITGEELEDVKLLEINTDLPTIFASTLFGPNDSGIILQATEKQIRLMSSSGLSKFWEPTNGEIISKVSVNAANGQIVLAARDTVYLLTCIVDEMGALDIQLTAEKKFENEIACLDLSNEGDDPNNKATFLVLAFWSTFAMEVIQLPDLITVCHTDLPTKIIPRSIIATCIEEVHYLLVAFGDGALVYYVFDIKTGTHGEPKKSNVGTRPPSLHRVRNKNRQHLFVCSDRPVIIFSASKKLVFSNVNVKLVDTVCSLSSSAYRDCLVISDGNSMVFGTVDDIQKIHVRSIPMGESVLRIAYQKSTSTYGVCSNRTESKAERVFASKNALVTSQSRPKVASTRADMDESPPNTTSSFMVLDQNTFQVLHSHEFGPWETALSCISGQFTNDSSTYYVVGTGLIYPDETETKIGRIVVFEVDDVERSKLRRVHELVVRGSPLAIRILNGKLVAAINSSIRLFEWTTDKELRLECSSFNHVIALDLKVMNEEVAVADVMRSVSLLSYRMLEGNFEEVAKDWNSQWMVTCEFITAESILGGEAHLNLFTVEVDKTRPITDDGRYVLEPTGYWYLGELPKVMTRSTLVIQPEDSIIQYSQPIMFGTNQGTIGMIVQIDDKWKKFLIAIEKAIADSVKNCMHIEHSSYRTFVFQKRAEPPSGFVDGDLVESILDMDRSVAMDILSKVSDKGWDPSLPRDPVEILKVIEDLARMH</sequence>
<reference key="1">
    <citation type="journal article" date="1998" name="Science">
        <title>Genome sequence of the nematode C. elegans: a platform for investigating biology.</title>
        <authorList>
            <consortium name="The C. elegans sequencing consortium"/>
        </authorList>
    </citation>
    <scope>NUCLEOTIDE SEQUENCE [LARGE SCALE GENOMIC DNA]</scope>
    <source>
        <strain>Bristol N2</strain>
    </source>
</reference>
<reference key="2">
    <citation type="submission" date="1999-11" db="EMBL/GenBank/DDBJ databases">
        <authorList>
            <consortium name="WormBase consortium"/>
        </authorList>
    </citation>
    <scope>SEQUENCE REVISION</scope>
</reference>
<reference key="3">
    <citation type="journal article" date="2007" name="Mol. Cell. Biol.">
        <title>The Caenorhabditis elegans replication licensing factor CDT-1 is targeted for degradation by the CUL-4/DDB-1 complex.</title>
        <authorList>
            <person name="Kim Y."/>
            <person name="Kipreos E.T."/>
        </authorList>
    </citation>
    <scope>FUNCTION</scope>
    <scope>INTERACTION WITH CDT-1 AND CUL-4</scope>
    <scope>TISSUE SPECIFICITY</scope>
    <scope>DEVELOPMENTAL STAGE</scope>
</reference>
<protein>
    <recommendedName>
        <fullName>DNA damage-binding protein 1</fullName>
    </recommendedName>
    <alternativeName>
        <fullName>Damage-specific DNA-binding protein 1</fullName>
    </alternativeName>
</protein>
<comment type="function">
    <text evidence="1 2">Plays a role in DNA repair. May be a component of an E3 ubiquitin-protein ligase which promotes histone ubiquitination in response to UV irradiation. Histone ubiquitination may be important for subsequent DNA repair (By similarity). Promotes the degradation of the replication licensing factor cdt-1 during S-phase, thereby preventing rereplication of DNA during a single round of cell division.</text>
</comment>
<comment type="pathway">
    <text>Protein modification; protein ubiquitination.</text>
</comment>
<comment type="subunit">
    <text evidence="2">Interacts with cdt-1 and cul-4.</text>
</comment>
<comment type="interaction">
    <interactant intactId="EBI-325461">
        <id>Q21554</id>
    </interactant>
    <interactant intactId="EBI-3902879">
        <id>Q86S68</id>
        <label>cdt-1</label>
    </interactant>
    <organismsDiffer>false</organismsDiffer>
    <experiments>3</experiments>
</comment>
<comment type="subcellular location">
    <subcellularLocation>
        <location evidence="1">Cytoplasm</location>
    </subcellularLocation>
    <subcellularLocation>
        <location evidence="1">Nucleus</location>
    </subcellularLocation>
</comment>
<comment type="tissue specificity">
    <text evidence="2">Expressed at high levels in the spermatheca of adult hermaphrodites.</text>
</comment>
<comment type="developmental stage">
    <text evidence="2">Expressed in proliferating larval blast cells including seam cells in the lateral hypodermis, P cells in the ventral hypodermis, and intestinal cells. Within the P cell lineage expression levels correlate with the proliferative state, being low in newly hatched larvae and then increasing in L1 as P cells begin to proliferate. Not expressed in the adult cells of the P lineage which are postmitotic. Also expressed in some non-proliferating cells such as the lateral hyp7 hypodermal cells, rectal gland and epithelial cells, and a subset of neuronal cells in the head and tail regions.</text>
</comment>
<comment type="similarity">
    <text evidence="3">Belongs to the DDB1 family.</text>
</comment>
<accession>Q21554</accession>
<evidence type="ECO:0000250" key="1"/>
<evidence type="ECO:0000269" key="2">
    <source>
    </source>
</evidence>
<evidence type="ECO:0000305" key="3"/>